<comment type="function">
    <text evidence="1">Tetrapolymerization of the monopyrrole PBG into the hydroxymethylbilane pre-uroporphyrinogen in several discrete steps.</text>
</comment>
<comment type="catalytic activity">
    <reaction>
        <text>4 porphobilinogen + H2O = hydroxymethylbilane + 4 NH4(+)</text>
        <dbReference type="Rhea" id="RHEA:13185"/>
        <dbReference type="ChEBI" id="CHEBI:15377"/>
        <dbReference type="ChEBI" id="CHEBI:28938"/>
        <dbReference type="ChEBI" id="CHEBI:57845"/>
        <dbReference type="ChEBI" id="CHEBI:58126"/>
        <dbReference type="EC" id="2.5.1.61"/>
    </reaction>
</comment>
<comment type="cofactor">
    <cofactor evidence="1">
        <name>dipyrromethane</name>
        <dbReference type="ChEBI" id="CHEBI:60342"/>
    </cofactor>
    <text evidence="1">Binds 1 dipyrromethane group covalently.</text>
</comment>
<comment type="pathway">
    <text>Porphyrin-containing compound metabolism; protoporphyrin-IX biosynthesis; coproporphyrinogen-III from 5-aminolevulinate: step 2/4.</text>
</comment>
<comment type="subunit">
    <text evidence="1">Monomer.</text>
</comment>
<comment type="miscellaneous">
    <text evidence="1">The porphobilinogen subunits are added to the dipyrromethane group.</text>
</comment>
<comment type="similarity">
    <text evidence="2">Belongs to the HMBS family.</text>
</comment>
<comment type="sequence caution" evidence="2">
    <conflict type="erroneous initiation">
        <sequence resource="EMBL-CDS" id="BAA05861"/>
    </conflict>
</comment>
<evidence type="ECO:0000250" key="1"/>
<evidence type="ECO:0000305" key="2"/>
<organism>
    <name type="scientific">Ruminiclostridium josui</name>
    <name type="common">Clostridium josui</name>
    <dbReference type="NCBI Taxonomy" id="1499"/>
    <lineage>
        <taxon>Bacteria</taxon>
        <taxon>Bacillati</taxon>
        <taxon>Bacillota</taxon>
        <taxon>Clostridia</taxon>
        <taxon>Eubacteriales</taxon>
        <taxon>Oscillospiraceae</taxon>
        <taxon>Ruminiclostridium</taxon>
    </lineage>
</organism>
<name>HEM3_RUMJO</name>
<sequence>MKKIRIGSRDSKLAIIQSELIMSAIRKYDPDIELELITMKTTGDKILDKTLDKIEGKGLFVKELDNALYNNEVDITVHSYKDMPLEENPELPVVALSKREDPRDAFILPQNGENGEPIGSSSLRRQLQLKELFPGCKTAPIRGNVQTRLKKLDSGEFSAIVLAAAGIKRLGLESRIGRYFSVDEILPAASQGIIAVQGRVGENFDFLKLFHSEESLCISLAERTFVREMNGGCSTPIAAYATIQGSEIILKGLYCNETTGELRKECVSGNRNNPVELGYELVKKMKSSKSI</sequence>
<accession>Q59293</accession>
<feature type="chain" id="PRO_0000142926" description="Porphobilinogen deaminase">
    <location>
        <begin position="1"/>
        <end position="291"/>
    </location>
</feature>
<feature type="modified residue" description="S-(dipyrrolylmethanemethyl)cysteine" evidence="1">
    <location>
        <position position="233"/>
    </location>
</feature>
<keyword id="KW-0627">Porphyrin biosynthesis</keyword>
<keyword id="KW-0808">Transferase</keyword>
<proteinExistence type="inferred from homology"/>
<gene>
    <name type="primary">hemC</name>
</gene>
<dbReference type="EC" id="2.5.1.61"/>
<dbReference type="EMBL" id="D28503">
    <property type="protein sequence ID" value="BAA05861.1"/>
    <property type="status" value="ALT_INIT"/>
    <property type="molecule type" value="Genomic_DNA"/>
</dbReference>
<dbReference type="PIR" id="I40810">
    <property type="entry name" value="I40810"/>
</dbReference>
<dbReference type="SMR" id="Q59293"/>
<dbReference type="UniPathway" id="UPA00251">
    <property type="reaction ID" value="UER00319"/>
</dbReference>
<dbReference type="GO" id="GO:0005737">
    <property type="term" value="C:cytoplasm"/>
    <property type="evidence" value="ECO:0007669"/>
    <property type="project" value="TreeGrafter"/>
</dbReference>
<dbReference type="GO" id="GO:0004418">
    <property type="term" value="F:hydroxymethylbilane synthase activity"/>
    <property type="evidence" value="ECO:0007669"/>
    <property type="project" value="UniProtKB-UniRule"/>
</dbReference>
<dbReference type="GO" id="GO:0006782">
    <property type="term" value="P:protoporphyrinogen IX biosynthetic process"/>
    <property type="evidence" value="ECO:0007669"/>
    <property type="project" value="UniProtKB-UniRule"/>
</dbReference>
<dbReference type="CDD" id="cd00494">
    <property type="entry name" value="PBP2_HMBS"/>
    <property type="match status" value="1"/>
</dbReference>
<dbReference type="FunFam" id="3.40.190.10:FF:000005">
    <property type="entry name" value="Porphobilinogen deaminase"/>
    <property type="match status" value="1"/>
</dbReference>
<dbReference type="Gene3D" id="3.40.190.10">
    <property type="entry name" value="Periplasmic binding protein-like II"/>
    <property type="match status" value="2"/>
</dbReference>
<dbReference type="Gene3D" id="3.30.160.40">
    <property type="entry name" value="Porphobilinogen deaminase, C-terminal domain"/>
    <property type="match status" value="1"/>
</dbReference>
<dbReference type="HAMAP" id="MF_00260">
    <property type="entry name" value="Porphobil_deam"/>
    <property type="match status" value="1"/>
</dbReference>
<dbReference type="InterPro" id="IPR000860">
    <property type="entry name" value="HemC"/>
</dbReference>
<dbReference type="InterPro" id="IPR022419">
    <property type="entry name" value="Porphobilin_deaminase_cofac_BS"/>
</dbReference>
<dbReference type="InterPro" id="IPR022417">
    <property type="entry name" value="Porphobilin_deaminase_N"/>
</dbReference>
<dbReference type="InterPro" id="IPR022418">
    <property type="entry name" value="Porphobilinogen_deaminase_C"/>
</dbReference>
<dbReference type="InterPro" id="IPR036803">
    <property type="entry name" value="Porphobilinogen_deaminase_C_sf"/>
</dbReference>
<dbReference type="NCBIfam" id="TIGR00212">
    <property type="entry name" value="hemC"/>
    <property type="match status" value="1"/>
</dbReference>
<dbReference type="PANTHER" id="PTHR11557">
    <property type="entry name" value="PORPHOBILINOGEN DEAMINASE"/>
    <property type="match status" value="1"/>
</dbReference>
<dbReference type="PANTHER" id="PTHR11557:SF0">
    <property type="entry name" value="PORPHOBILINOGEN DEAMINASE"/>
    <property type="match status" value="1"/>
</dbReference>
<dbReference type="Pfam" id="PF01379">
    <property type="entry name" value="Porphobil_deam"/>
    <property type="match status" value="1"/>
</dbReference>
<dbReference type="Pfam" id="PF03900">
    <property type="entry name" value="Porphobil_deamC"/>
    <property type="match status" value="1"/>
</dbReference>
<dbReference type="PIRSF" id="PIRSF001438">
    <property type="entry name" value="4pyrrol_synth_OHMeBilane_synth"/>
    <property type="match status" value="1"/>
</dbReference>
<dbReference type="PRINTS" id="PR00151">
    <property type="entry name" value="PORPHBDMNASE"/>
</dbReference>
<dbReference type="SUPFAM" id="SSF53850">
    <property type="entry name" value="Periplasmic binding protein-like II"/>
    <property type="match status" value="1"/>
</dbReference>
<dbReference type="SUPFAM" id="SSF54782">
    <property type="entry name" value="Porphobilinogen deaminase (hydroxymethylbilane synthase), C-terminal domain"/>
    <property type="match status" value="1"/>
</dbReference>
<dbReference type="PROSITE" id="PS00533">
    <property type="entry name" value="PORPHOBILINOGEN_DEAM"/>
    <property type="match status" value="1"/>
</dbReference>
<reference key="1">
    <citation type="journal article" date="1995" name="J. Bacteriol.">
        <title>Cloning and sequencing of some genes responsible for porphyrin biosynthesis from the anaerobic bacterium Clostridium josui.</title>
        <authorList>
            <person name="Fujino E."/>
            <person name="Fujino T."/>
            <person name="Karita S."/>
            <person name="Sakka K."/>
            <person name="Ohmiya K."/>
        </authorList>
    </citation>
    <scope>NUCLEOTIDE SEQUENCE [GENOMIC DNA]</scope>
    <source>
        <strain>DSM 25723 / FERM P-9684 / JCM 17888 / KCTC 15379 / III</strain>
    </source>
</reference>
<protein>
    <recommendedName>
        <fullName>Porphobilinogen deaminase</fullName>
        <shortName>PBG</shortName>
        <ecNumber>2.5.1.61</ecNumber>
    </recommendedName>
    <alternativeName>
        <fullName>Hydroxymethylbilane synthase</fullName>
        <shortName>HMBS</shortName>
    </alternativeName>
    <alternativeName>
        <fullName>Pre-uroporphyrinogen synthase</fullName>
    </alternativeName>
</protein>